<protein>
    <recommendedName>
        <fullName evidence="1">Pyrimidine-specific ribonucleoside hydrolase RihA</fullName>
        <ecNumber evidence="1">3.2.-.-</ecNumber>
    </recommendedName>
    <alternativeName>
        <fullName evidence="1">Cytidine/uridine-specific hydrolase</fullName>
    </alternativeName>
</protein>
<organism>
    <name type="scientific">Shewanella sp. (strain ANA-3)</name>
    <dbReference type="NCBI Taxonomy" id="94122"/>
    <lineage>
        <taxon>Bacteria</taxon>
        <taxon>Pseudomonadati</taxon>
        <taxon>Pseudomonadota</taxon>
        <taxon>Gammaproteobacteria</taxon>
        <taxon>Alteromonadales</taxon>
        <taxon>Shewanellaceae</taxon>
        <taxon>Shewanella</taxon>
    </lineage>
</organism>
<accession>A0L0Y0</accession>
<evidence type="ECO:0000255" key="1">
    <source>
        <dbReference type="HAMAP-Rule" id="MF_01431"/>
    </source>
</evidence>
<gene>
    <name evidence="1" type="primary">rihA</name>
    <name type="ordered locus">Shewana3_3476</name>
</gene>
<comment type="function">
    <text evidence="1">Hydrolyzes cytidine or uridine to ribose and cytosine or uracil, respectively.</text>
</comment>
<comment type="similarity">
    <text evidence="1">Belongs to the IUNH family. RihA subfamily.</text>
</comment>
<reference key="1">
    <citation type="submission" date="2006-09" db="EMBL/GenBank/DDBJ databases">
        <title>Complete sequence of chromosome 1 of Shewanella sp. ANA-3.</title>
        <authorList>
            <person name="Copeland A."/>
            <person name="Lucas S."/>
            <person name="Lapidus A."/>
            <person name="Barry K."/>
            <person name="Detter J.C."/>
            <person name="Glavina del Rio T."/>
            <person name="Hammon N."/>
            <person name="Israni S."/>
            <person name="Dalin E."/>
            <person name="Tice H."/>
            <person name="Pitluck S."/>
            <person name="Chertkov O."/>
            <person name="Brettin T."/>
            <person name="Bruce D."/>
            <person name="Han C."/>
            <person name="Tapia R."/>
            <person name="Gilna P."/>
            <person name="Schmutz J."/>
            <person name="Larimer F."/>
            <person name="Land M."/>
            <person name="Hauser L."/>
            <person name="Kyrpides N."/>
            <person name="Kim E."/>
            <person name="Newman D."/>
            <person name="Salticov C."/>
            <person name="Konstantinidis K."/>
            <person name="Klappenback J."/>
            <person name="Tiedje J."/>
            <person name="Richardson P."/>
        </authorList>
    </citation>
    <scope>NUCLEOTIDE SEQUENCE [LARGE SCALE GENOMIC DNA]</scope>
    <source>
        <strain>ANA-3</strain>
    </source>
</reference>
<feature type="chain" id="PRO_1000024399" description="Pyrimidine-specific ribonucleoside hydrolase RihA">
    <location>
        <begin position="1"/>
        <end position="318"/>
    </location>
</feature>
<feature type="active site" evidence="1">
    <location>
        <position position="240"/>
    </location>
</feature>
<name>RIHA_SHESA</name>
<keyword id="KW-0326">Glycosidase</keyword>
<keyword id="KW-0378">Hydrolase</keyword>
<proteinExistence type="inferred from homology"/>
<sequence length="318" mass="34289">MSRPIILDCDPGHDDAIALILALAHPELTPLAVTTSAGNQTPDKTLNNALRILTLLNRSDIPVAGGAVKPLSRELMIADNVHGETGLDGPALPAPSFQPQAVNAVELMAEKIRQSDKPVTLVPTGPLTNIALLLASHAELHAKIERIVLMGGAAGVGNWTPAAEFNIFVDPEAADIVFKSGIPITMCGLDVTHQAQIMDEDIERIRAIANPVAKCVAELLDFFMIYHRDPKWGFVGAPLHDPCTIAWLLNPALFDAQDCWVGIETQSELTLGMTVVDRYQLTGKPANATVLFGIDRQGFVDLLVDSLAVYTPTYLNRR</sequence>
<dbReference type="EC" id="3.2.-.-" evidence="1"/>
<dbReference type="EMBL" id="CP000469">
    <property type="protein sequence ID" value="ABK49699.1"/>
    <property type="molecule type" value="Genomic_DNA"/>
</dbReference>
<dbReference type="RefSeq" id="WP_011718268.1">
    <property type="nucleotide sequence ID" value="NC_008577.1"/>
</dbReference>
<dbReference type="SMR" id="A0L0Y0"/>
<dbReference type="STRING" id="94122.Shewana3_3476"/>
<dbReference type="KEGG" id="shn:Shewana3_3476"/>
<dbReference type="eggNOG" id="COG1957">
    <property type="taxonomic scope" value="Bacteria"/>
</dbReference>
<dbReference type="HOGENOM" id="CLU_036838_2_0_6"/>
<dbReference type="OrthoDB" id="9797882at2"/>
<dbReference type="Proteomes" id="UP000002589">
    <property type="component" value="Chromosome"/>
</dbReference>
<dbReference type="GO" id="GO:0005829">
    <property type="term" value="C:cytosol"/>
    <property type="evidence" value="ECO:0007669"/>
    <property type="project" value="TreeGrafter"/>
</dbReference>
<dbReference type="GO" id="GO:0008477">
    <property type="term" value="F:purine nucleosidase activity"/>
    <property type="evidence" value="ECO:0007669"/>
    <property type="project" value="TreeGrafter"/>
</dbReference>
<dbReference type="GO" id="GO:0045437">
    <property type="term" value="F:uridine nucleosidase activity"/>
    <property type="evidence" value="ECO:0007669"/>
    <property type="project" value="InterPro"/>
</dbReference>
<dbReference type="GO" id="GO:0015949">
    <property type="term" value="P:nucleobase-containing small molecule interconversion"/>
    <property type="evidence" value="ECO:0007669"/>
    <property type="project" value="InterPro"/>
</dbReference>
<dbReference type="GO" id="GO:0006152">
    <property type="term" value="P:purine nucleoside catabolic process"/>
    <property type="evidence" value="ECO:0007669"/>
    <property type="project" value="TreeGrafter"/>
</dbReference>
<dbReference type="GO" id="GO:0006206">
    <property type="term" value="P:pyrimidine nucleobase metabolic process"/>
    <property type="evidence" value="ECO:0007669"/>
    <property type="project" value="UniProtKB-UniRule"/>
</dbReference>
<dbReference type="CDD" id="cd02651">
    <property type="entry name" value="nuc_hydro_IU_UC_XIUA"/>
    <property type="match status" value="1"/>
</dbReference>
<dbReference type="FunFam" id="3.90.245.10:FF:000001">
    <property type="entry name" value="Pyrimidine-specific ribonucleoside hydrolase RihA"/>
    <property type="match status" value="1"/>
</dbReference>
<dbReference type="Gene3D" id="3.90.245.10">
    <property type="entry name" value="Ribonucleoside hydrolase-like"/>
    <property type="match status" value="1"/>
</dbReference>
<dbReference type="HAMAP" id="MF_01431">
    <property type="entry name" value="Pyrim_hydro_RihA"/>
    <property type="match status" value="1"/>
</dbReference>
<dbReference type="InterPro" id="IPR015910">
    <property type="entry name" value="I/U_nuclsd_hydro_CS"/>
</dbReference>
<dbReference type="InterPro" id="IPR001910">
    <property type="entry name" value="Inosine/uridine_hydrolase_dom"/>
</dbReference>
<dbReference type="InterPro" id="IPR023186">
    <property type="entry name" value="IUNH"/>
</dbReference>
<dbReference type="InterPro" id="IPR022975">
    <property type="entry name" value="Pyrim_hydro_RihA"/>
</dbReference>
<dbReference type="InterPro" id="IPR036452">
    <property type="entry name" value="Ribo_hydro-like"/>
</dbReference>
<dbReference type="NCBIfam" id="NF007761">
    <property type="entry name" value="PRK10443.1"/>
    <property type="match status" value="1"/>
</dbReference>
<dbReference type="PANTHER" id="PTHR12304">
    <property type="entry name" value="INOSINE-URIDINE PREFERRING NUCLEOSIDE HYDROLASE"/>
    <property type="match status" value="1"/>
</dbReference>
<dbReference type="PANTHER" id="PTHR12304:SF4">
    <property type="entry name" value="URIDINE NUCLEOSIDASE"/>
    <property type="match status" value="1"/>
</dbReference>
<dbReference type="Pfam" id="PF01156">
    <property type="entry name" value="IU_nuc_hydro"/>
    <property type="match status" value="1"/>
</dbReference>
<dbReference type="SUPFAM" id="SSF53590">
    <property type="entry name" value="Nucleoside hydrolase"/>
    <property type="match status" value="1"/>
</dbReference>
<dbReference type="PROSITE" id="PS01247">
    <property type="entry name" value="IUNH"/>
    <property type="match status" value="1"/>
</dbReference>